<proteinExistence type="inferred from homology"/>
<name>DAPE_CAMJ8</name>
<reference key="1">
    <citation type="journal article" date="2007" name="J. Bacteriol.">
        <title>The complete genome sequence of Campylobacter jejuni strain 81116 (NCTC11828).</title>
        <authorList>
            <person name="Pearson B.M."/>
            <person name="Gaskin D.J.H."/>
            <person name="Segers R.P.A.M."/>
            <person name="Wells J.M."/>
            <person name="Nuijten P.J.M."/>
            <person name="van Vliet A.H.M."/>
        </authorList>
    </citation>
    <scope>NUCLEOTIDE SEQUENCE [LARGE SCALE GENOMIC DNA]</scope>
    <source>
        <strain>81116 / NCTC 11828</strain>
    </source>
</reference>
<protein>
    <recommendedName>
        <fullName evidence="1">Succinyl-diaminopimelate desuccinylase</fullName>
        <shortName evidence="1">SDAP desuccinylase</shortName>
        <ecNumber evidence="1">3.5.1.18</ecNumber>
    </recommendedName>
    <alternativeName>
        <fullName evidence="1">N-succinyl-LL-2,6-diaminoheptanedioate amidohydrolase</fullName>
    </alternativeName>
</protein>
<keyword id="KW-0028">Amino-acid biosynthesis</keyword>
<keyword id="KW-0170">Cobalt</keyword>
<keyword id="KW-0220">Diaminopimelate biosynthesis</keyword>
<keyword id="KW-0378">Hydrolase</keyword>
<keyword id="KW-0457">Lysine biosynthesis</keyword>
<keyword id="KW-0479">Metal-binding</keyword>
<keyword id="KW-0862">Zinc</keyword>
<dbReference type="EC" id="3.5.1.18" evidence="1"/>
<dbReference type="EMBL" id="CP000814">
    <property type="protein sequence ID" value="ABV52588.1"/>
    <property type="molecule type" value="Genomic_DNA"/>
</dbReference>
<dbReference type="RefSeq" id="WP_002866081.1">
    <property type="nucleotide sequence ID" value="NC_009839.1"/>
</dbReference>
<dbReference type="SMR" id="A8FMA1"/>
<dbReference type="KEGG" id="cju:C8J_0989"/>
<dbReference type="HOGENOM" id="CLU_021802_4_0_7"/>
<dbReference type="UniPathway" id="UPA00034">
    <property type="reaction ID" value="UER00021"/>
</dbReference>
<dbReference type="GO" id="GO:0008777">
    <property type="term" value="F:acetylornithine deacetylase activity"/>
    <property type="evidence" value="ECO:0007669"/>
    <property type="project" value="TreeGrafter"/>
</dbReference>
<dbReference type="GO" id="GO:0046872">
    <property type="term" value="F:metal ion binding"/>
    <property type="evidence" value="ECO:0007669"/>
    <property type="project" value="UniProtKB-KW"/>
</dbReference>
<dbReference type="GO" id="GO:0009014">
    <property type="term" value="F:succinyl-diaminopimelate desuccinylase activity"/>
    <property type="evidence" value="ECO:0007669"/>
    <property type="project" value="UniProtKB-EC"/>
</dbReference>
<dbReference type="GO" id="GO:0019877">
    <property type="term" value="P:diaminopimelate biosynthetic process"/>
    <property type="evidence" value="ECO:0007669"/>
    <property type="project" value="UniProtKB-KW"/>
</dbReference>
<dbReference type="GO" id="GO:0006526">
    <property type="term" value="P:L-arginine biosynthetic process"/>
    <property type="evidence" value="ECO:0007669"/>
    <property type="project" value="TreeGrafter"/>
</dbReference>
<dbReference type="GO" id="GO:0009089">
    <property type="term" value="P:lysine biosynthetic process via diaminopimelate"/>
    <property type="evidence" value="ECO:0007669"/>
    <property type="project" value="UniProtKB-UniPathway"/>
</dbReference>
<dbReference type="CDD" id="cd03891">
    <property type="entry name" value="M20_DapE_proteobac"/>
    <property type="match status" value="1"/>
</dbReference>
<dbReference type="Gene3D" id="1.10.150.900">
    <property type="match status" value="1"/>
</dbReference>
<dbReference type="Gene3D" id="3.30.70.360">
    <property type="match status" value="1"/>
</dbReference>
<dbReference type="Gene3D" id="3.40.630.10">
    <property type="entry name" value="Zn peptidases"/>
    <property type="match status" value="1"/>
</dbReference>
<dbReference type="HAMAP" id="MF_01690">
    <property type="entry name" value="DapE"/>
    <property type="match status" value="1"/>
</dbReference>
<dbReference type="InterPro" id="IPR001261">
    <property type="entry name" value="ArgE/DapE_CS"/>
</dbReference>
<dbReference type="InterPro" id="IPR036264">
    <property type="entry name" value="Bact_exopeptidase_dim_dom"/>
</dbReference>
<dbReference type="InterPro" id="IPR005941">
    <property type="entry name" value="DapE_proteobac"/>
</dbReference>
<dbReference type="InterPro" id="IPR002933">
    <property type="entry name" value="Peptidase_M20"/>
</dbReference>
<dbReference type="InterPro" id="IPR011650">
    <property type="entry name" value="Peptidase_M20_dimer"/>
</dbReference>
<dbReference type="InterPro" id="IPR050072">
    <property type="entry name" value="Peptidase_M20A"/>
</dbReference>
<dbReference type="NCBIfam" id="TIGR01246">
    <property type="entry name" value="dapE_proteo"/>
    <property type="match status" value="1"/>
</dbReference>
<dbReference type="NCBIfam" id="NF009557">
    <property type="entry name" value="PRK13009.1"/>
    <property type="match status" value="1"/>
</dbReference>
<dbReference type="PANTHER" id="PTHR43808">
    <property type="entry name" value="ACETYLORNITHINE DEACETYLASE"/>
    <property type="match status" value="1"/>
</dbReference>
<dbReference type="PANTHER" id="PTHR43808:SF31">
    <property type="entry name" value="N-ACETYL-L-CITRULLINE DEACETYLASE"/>
    <property type="match status" value="1"/>
</dbReference>
<dbReference type="Pfam" id="PF07687">
    <property type="entry name" value="M20_dimer"/>
    <property type="match status" value="1"/>
</dbReference>
<dbReference type="Pfam" id="PF01546">
    <property type="entry name" value="Peptidase_M20"/>
    <property type="match status" value="1"/>
</dbReference>
<dbReference type="SUPFAM" id="SSF55031">
    <property type="entry name" value="Bacterial exopeptidase dimerisation domain"/>
    <property type="match status" value="1"/>
</dbReference>
<dbReference type="SUPFAM" id="SSF53187">
    <property type="entry name" value="Zn-dependent exopeptidases"/>
    <property type="match status" value="1"/>
</dbReference>
<dbReference type="PROSITE" id="PS00758">
    <property type="entry name" value="ARGE_DAPE_CPG2_1"/>
    <property type="match status" value="1"/>
</dbReference>
<dbReference type="PROSITE" id="PS00759">
    <property type="entry name" value="ARGE_DAPE_CPG2_2"/>
    <property type="match status" value="1"/>
</dbReference>
<comment type="function">
    <text evidence="1">Catalyzes the hydrolysis of N-succinyl-L,L-diaminopimelic acid (SDAP), forming succinate and LL-2,6-diaminopimelate (DAP), an intermediate involved in the bacterial biosynthesis of lysine and meso-diaminopimelic acid, an essential component of bacterial cell walls.</text>
</comment>
<comment type="catalytic activity">
    <reaction evidence="1">
        <text>N-succinyl-(2S,6S)-2,6-diaminopimelate + H2O = (2S,6S)-2,6-diaminopimelate + succinate</text>
        <dbReference type="Rhea" id="RHEA:22608"/>
        <dbReference type="ChEBI" id="CHEBI:15377"/>
        <dbReference type="ChEBI" id="CHEBI:30031"/>
        <dbReference type="ChEBI" id="CHEBI:57609"/>
        <dbReference type="ChEBI" id="CHEBI:58087"/>
        <dbReference type="EC" id="3.5.1.18"/>
    </reaction>
</comment>
<comment type="cofactor">
    <cofactor evidence="1">
        <name>Zn(2+)</name>
        <dbReference type="ChEBI" id="CHEBI:29105"/>
    </cofactor>
    <cofactor evidence="1">
        <name>Co(2+)</name>
        <dbReference type="ChEBI" id="CHEBI:48828"/>
    </cofactor>
    <text evidence="1">Binds 2 Zn(2+) or Co(2+) ions per subunit.</text>
</comment>
<comment type="pathway">
    <text evidence="1">Amino-acid biosynthesis; L-lysine biosynthesis via DAP pathway; LL-2,6-diaminopimelate from (S)-tetrahydrodipicolinate (succinylase route): step 3/3.</text>
</comment>
<comment type="subunit">
    <text evidence="1">Homodimer.</text>
</comment>
<comment type="similarity">
    <text evidence="1">Belongs to the peptidase M20A family. DapE subfamily.</text>
</comment>
<sequence>MNAKEFLIELLKFKSVTPNDDGALNFIAMELSDFEAFFIEKEGIKNLLLTKKFNDEGEHLAFGGHVDVVPAGEGWKNDPFEPLEEEGFIYARGAQDMKSGVAAFIDAVKDVSFKGRRLSLILTSDEEGEAKYGTKAVLEWMKEKNMLPDYAVVAEPTCVKKMGDSIKIGRRGSINGKLLIRGKQGHVAYPEKCINPVHDFAPVLKLLAGFDLDPGSAEFSPSKIVITDIRGGMGVCNVTPNDLKLMFNVRNSPDTSLEDVKSYVEKICHGLNYELELKQSSEAFLTNIDNKIVQKMNESVQKITHEVPELNTKGGTSDARYFAKYGVKVVEFGVCNDRIHAIDERVSIEEFEKLCLVFKDLIENF</sequence>
<accession>A8FMA1</accession>
<feature type="chain" id="PRO_0000375524" description="Succinyl-diaminopimelate desuccinylase">
    <location>
        <begin position="1"/>
        <end position="365"/>
    </location>
</feature>
<feature type="active site" evidence="1">
    <location>
        <position position="67"/>
    </location>
</feature>
<feature type="active site" description="Proton acceptor" evidence="1">
    <location>
        <position position="126"/>
    </location>
</feature>
<feature type="binding site" evidence="1">
    <location>
        <position position="65"/>
    </location>
    <ligand>
        <name>Zn(2+)</name>
        <dbReference type="ChEBI" id="CHEBI:29105"/>
        <label>1</label>
    </ligand>
</feature>
<feature type="binding site" evidence="1">
    <location>
        <position position="96"/>
    </location>
    <ligand>
        <name>Zn(2+)</name>
        <dbReference type="ChEBI" id="CHEBI:29105"/>
        <label>1</label>
    </ligand>
</feature>
<feature type="binding site" evidence="1">
    <location>
        <position position="96"/>
    </location>
    <ligand>
        <name>Zn(2+)</name>
        <dbReference type="ChEBI" id="CHEBI:29105"/>
        <label>2</label>
    </ligand>
</feature>
<feature type="binding site" evidence="1">
    <location>
        <position position="127"/>
    </location>
    <ligand>
        <name>Zn(2+)</name>
        <dbReference type="ChEBI" id="CHEBI:29105"/>
        <label>2</label>
    </ligand>
</feature>
<feature type="binding site" evidence="1">
    <location>
        <position position="155"/>
    </location>
    <ligand>
        <name>Zn(2+)</name>
        <dbReference type="ChEBI" id="CHEBI:29105"/>
        <label>1</label>
    </ligand>
</feature>
<feature type="binding site" evidence="1">
    <location>
        <position position="340"/>
    </location>
    <ligand>
        <name>Zn(2+)</name>
        <dbReference type="ChEBI" id="CHEBI:29105"/>
        <label>2</label>
    </ligand>
</feature>
<gene>
    <name evidence="1" type="primary">dapE</name>
    <name type="ordered locus">C8J_0989</name>
</gene>
<organism>
    <name type="scientific">Campylobacter jejuni subsp. jejuni serotype O:6 (strain 81116 / NCTC 11828)</name>
    <dbReference type="NCBI Taxonomy" id="407148"/>
    <lineage>
        <taxon>Bacteria</taxon>
        <taxon>Pseudomonadati</taxon>
        <taxon>Campylobacterota</taxon>
        <taxon>Epsilonproteobacteria</taxon>
        <taxon>Campylobacterales</taxon>
        <taxon>Campylobacteraceae</taxon>
        <taxon>Campylobacter</taxon>
    </lineage>
</organism>
<evidence type="ECO:0000255" key="1">
    <source>
        <dbReference type="HAMAP-Rule" id="MF_01690"/>
    </source>
</evidence>